<gene>
    <name evidence="1" type="primary">NSUN2</name>
    <name type="ORF">RCJMB04_4l11</name>
</gene>
<dbReference type="EC" id="2.1.1.-" evidence="1"/>
<dbReference type="EC" id="2.1.1.203" evidence="1"/>
<dbReference type="EMBL" id="AJ719630">
    <property type="protein sequence ID" value="CAG31289.1"/>
    <property type="molecule type" value="mRNA"/>
</dbReference>
<dbReference type="RefSeq" id="NP_001026175.1">
    <property type="nucleotide sequence ID" value="NM_001031004.1"/>
</dbReference>
<dbReference type="SMR" id="Q5ZLV4"/>
<dbReference type="FunCoup" id="Q5ZLV4">
    <property type="interactions" value="3090"/>
</dbReference>
<dbReference type="STRING" id="9031.ENSGALP00000021294"/>
<dbReference type="PaxDb" id="9031-ENSGALP00000021294"/>
<dbReference type="GeneID" id="420938"/>
<dbReference type="KEGG" id="gga:420938"/>
<dbReference type="CTD" id="54888"/>
<dbReference type="VEuPathDB" id="HostDB:geneid_420938"/>
<dbReference type="eggNOG" id="KOG2198">
    <property type="taxonomic scope" value="Eukaryota"/>
</dbReference>
<dbReference type="InParanoid" id="Q5ZLV4"/>
<dbReference type="OrthoDB" id="6093671at2759"/>
<dbReference type="PhylomeDB" id="Q5ZLV4"/>
<dbReference type="PRO" id="PR:Q5ZLV4"/>
<dbReference type="Proteomes" id="UP000000539">
    <property type="component" value="Unassembled WGS sequence"/>
</dbReference>
<dbReference type="GO" id="GO:0005737">
    <property type="term" value="C:cytoplasm"/>
    <property type="evidence" value="ECO:0000318"/>
    <property type="project" value="GO_Central"/>
</dbReference>
<dbReference type="GO" id="GO:0070062">
    <property type="term" value="C:extracellular exosome"/>
    <property type="evidence" value="ECO:0000250"/>
    <property type="project" value="UniProtKB"/>
</dbReference>
<dbReference type="GO" id="GO:0005739">
    <property type="term" value="C:mitochondrion"/>
    <property type="evidence" value="ECO:0000250"/>
    <property type="project" value="UniProtKB"/>
</dbReference>
<dbReference type="GO" id="GO:0005730">
    <property type="term" value="C:nucleolus"/>
    <property type="evidence" value="ECO:0007669"/>
    <property type="project" value="UniProtKB-SubCell"/>
</dbReference>
<dbReference type="GO" id="GO:0005634">
    <property type="term" value="C:nucleus"/>
    <property type="evidence" value="ECO:0000318"/>
    <property type="project" value="GO_Central"/>
</dbReference>
<dbReference type="GO" id="GO:0005819">
    <property type="term" value="C:spindle"/>
    <property type="evidence" value="ECO:0007669"/>
    <property type="project" value="UniProtKB-SubCell"/>
</dbReference>
<dbReference type="GO" id="GO:0062152">
    <property type="term" value="F:mRNA (cytidine-5-)-methyltransferase activity"/>
    <property type="evidence" value="ECO:0000250"/>
    <property type="project" value="UniProtKB"/>
</dbReference>
<dbReference type="GO" id="GO:0016428">
    <property type="term" value="F:tRNA (cytidine-5-)-methyltransferase activity"/>
    <property type="evidence" value="ECO:0000250"/>
    <property type="project" value="UniProtKB"/>
</dbReference>
<dbReference type="GO" id="GO:0000049">
    <property type="term" value="F:tRNA binding"/>
    <property type="evidence" value="ECO:0000318"/>
    <property type="project" value="GO_Central"/>
</dbReference>
<dbReference type="GO" id="GO:0010793">
    <property type="term" value="P:regulation of mRNA export from nucleus"/>
    <property type="evidence" value="ECO:0000250"/>
    <property type="project" value="UniProtKB"/>
</dbReference>
<dbReference type="GO" id="GO:2000736">
    <property type="term" value="P:regulation of stem cell differentiation"/>
    <property type="evidence" value="ECO:0000250"/>
    <property type="project" value="UniProtKB"/>
</dbReference>
<dbReference type="GO" id="GO:0030488">
    <property type="term" value="P:tRNA methylation"/>
    <property type="evidence" value="ECO:0000250"/>
    <property type="project" value="UniProtKB"/>
</dbReference>
<dbReference type="GO" id="GO:0036416">
    <property type="term" value="P:tRNA stabilization"/>
    <property type="evidence" value="ECO:0000250"/>
    <property type="project" value="UniProtKB"/>
</dbReference>
<dbReference type="Gene3D" id="3.40.50.150">
    <property type="entry name" value="Vaccinia Virus protein VP39"/>
    <property type="match status" value="1"/>
</dbReference>
<dbReference type="InterPro" id="IPR049560">
    <property type="entry name" value="MeTrfase_RsmB-F_NOP2_cat"/>
</dbReference>
<dbReference type="InterPro" id="IPR001678">
    <property type="entry name" value="MeTrfase_RsmB-F_NOP2_dom"/>
</dbReference>
<dbReference type="InterPro" id="IPR023267">
    <property type="entry name" value="RCMT"/>
</dbReference>
<dbReference type="InterPro" id="IPR023270">
    <property type="entry name" value="RCMT_NCL1"/>
</dbReference>
<dbReference type="InterPro" id="IPR029063">
    <property type="entry name" value="SAM-dependent_MTases_sf"/>
</dbReference>
<dbReference type="PANTHER" id="PTHR22808">
    <property type="entry name" value="NCL1 YEAST -RELATED NOL1/NOP2/FMU SUN DOMAIN-CONTAINING"/>
    <property type="match status" value="1"/>
</dbReference>
<dbReference type="PANTHER" id="PTHR22808:SF1">
    <property type="entry name" value="RNA CYTOSINE-C(5)-METHYLTRANSFERASE NSUN2-RELATED"/>
    <property type="match status" value="1"/>
</dbReference>
<dbReference type="Pfam" id="PF01189">
    <property type="entry name" value="Methyltr_RsmB-F"/>
    <property type="match status" value="1"/>
</dbReference>
<dbReference type="Pfam" id="PF25376">
    <property type="entry name" value="Pre-PUA_NSUN2"/>
    <property type="match status" value="1"/>
</dbReference>
<dbReference type="Pfam" id="PF25378">
    <property type="entry name" value="PUA_NSUN2"/>
    <property type="match status" value="1"/>
</dbReference>
<dbReference type="PRINTS" id="PR02008">
    <property type="entry name" value="RCMTFAMILY"/>
</dbReference>
<dbReference type="PRINTS" id="PR02011">
    <property type="entry name" value="RCMTNCL1"/>
</dbReference>
<dbReference type="SUPFAM" id="SSF53335">
    <property type="entry name" value="S-adenosyl-L-methionine-dependent methyltransferases"/>
    <property type="match status" value="1"/>
</dbReference>
<dbReference type="PROSITE" id="PS51686">
    <property type="entry name" value="SAM_MT_RSMB_NOP"/>
    <property type="match status" value="1"/>
</dbReference>
<reference key="1">
    <citation type="journal article" date="2005" name="Genome Biol.">
        <title>Full-length cDNAs from chicken bursal lymphocytes to facilitate gene function analysis.</title>
        <authorList>
            <person name="Caldwell R.B."/>
            <person name="Kierzek A.M."/>
            <person name="Arakawa H."/>
            <person name="Bezzubov Y."/>
            <person name="Zaim J."/>
            <person name="Fiedler P."/>
            <person name="Kutter S."/>
            <person name="Blagodatski A."/>
            <person name="Kostovska D."/>
            <person name="Koter M."/>
            <person name="Plachy J."/>
            <person name="Carninci P."/>
            <person name="Hayashizaki Y."/>
            <person name="Buerstedde J.-M."/>
        </authorList>
    </citation>
    <scope>NUCLEOTIDE SEQUENCE [LARGE SCALE MRNA]</scope>
    <source>
        <strain>CB</strain>
        <tissue>Bursa of Fabricius</tissue>
    </source>
</reference>
<protein>
    <recommendedName>
        <fullName evidence="5">RNA cytosine-C(5)-methyltransferase NSUN2</fullName>
        <ecNumber evidence="1">2.1.1.-</ecNumber>
    </recommendedName>
    <alternativeName>
        <fullName evidence="1">NOL1/NOP2/Sun domain family member 2</fullName>
    </alternativeName>
    <alternativeName>
        <fullName evidence="5">mRNA cytosine C(5)-methyltransferase</fullName>
        <ecNumber evidence="1">2.1.1.-</ecNumber>
    </alternativeName>
    <alternativeName>
        <fullName evidence="5">tRNA cytosine C(5)-methyltransferase</fullName>
        <ecNumber evidence="1">2.1.1.-</ecNumber>
        <ecNumber evidence="1">2.1.1.203</ecNumber>
    </alternativeName>
</protein>
<feature type="chain" id="PRO_0000289225" description="RNA cytosine-C(5)-methyltransferase NSUN2">
    <location>
        <begin position="1"/>
        <end position="796"/>
    </location>
</feature>
<feature type="region of interest" description="Disordered" evidence="4">
    <location>
        <begin position="1"/>
        <end position="36"/>
    </location>
</feature>
<feature type="region of interest" description="Disordered" evidence="4">
    <location>
        <begin position="435"/>
        <end position="501"/>
    </location>
</feature>
<feature type="region of interest" description="Disordered" evidence="4">
    <location>
        <begin position="707"/>
        <end position="796"/>
    </location>
</feature>
<feature type="compositionally biased region" description="Basic residues" evidence="4">
    <location>
        <begin position="1"/>
        <end position="11"/>
    </location>
</feature>
<feature type="compositionally biased region" description="Gly residues" evidence="4">
    <location>
        <begin position="22"/>
        <end position="36"/>
    </location>
</feature>
<feature type="compositionally biased region" description="Basic and acidic residues" evidence="4">
    <location>
        <begin position="467"/>
        <end position="483"/>
    </location>
</feature>
<feature type="compositionally biased region" description="Basic and acidic residues" evidence="4">
    <location>
        <begin position="708"/>
        <end position="721"/>
    </location>
</feature>
<feature type="compositionally biased region" description="Basic and acidic residues" evidence="4">
    <location>
        <begin position="733"/>
        <end position="746"/>
    </location>
</feature>
<feature type="compositionally biased region" description="Polar residues" evidence="4">
    <location>
        <begin position="774"/>
        <end position="783"/>
    </location>
</feature>
<feature type="compositionally biased region" description="Basic and acidic residues" evidence="4">
    <location>
        <begin position="784"/>
        <end position="796"/>
    </location>
</feature>
<feature type="active site" description="Nucleophile" evidence="3">
    <location>
        <position position="321"/>
    </location>
</feature>
<feature type="binding site" evidence="3">
    <location>
        <begin position="184"/>
        <end position="190"/>
    </location>
    <ligand>
        <name>S-adenosyl-L-methionine</name>
        <dbReference type="ChEBI" id="CHEBI:59789"/>
    </ligand>
</feature>
<feature type="binding site" evidence="3">
    <location>
        <position position="215"/>
    </location>
    <ligand>
        <name>S-adenosyl-L-methionine</name>
        <dbReference type="ChEBI" id="CHEBI:59789"/>
    </ligand>
</feature>
<feature type="binding site" evidence="3">
    <location>
        <position position="242"/>
    </location>
    <ligand>
        <name>S-adenosyl-L-methionine</name>
        <dbReference type="ChEBI" id="CHEBI:59789"/>
    </ligand>
</feature>
<feature type="binding site" evidence="3">
    <location>
        <position position="268"/>
    </location>
    <ligand>
        <name>S-adenosyl-L-methionine</name>
        <dbReference type="ChEBI" id="CHEBI:59789"/>
    </ligand>
</feature>
<sequence>MGRRARDRRRQLQPQQRRERSGGGGGGGDDQAGWAGGYPEIVKENELFERYYREQRIVPDGEWDAFMAALREPLPATLRITGYKSHAREILHCLKEKYFRELQHLEVDGQKVEMPQALSWYPEELAWHTNLSRKILRKSPQLERFHQFLVSETECGNISRQEAVSMIPPLLLNVNPDHKILDMCAAPGSKTAQLIEMLHADMNVPFPKGFVIANDVDNKRCYLLVHQAKRLNSPCIMVVNHDASSIPNLQVDVDGRKETLFYDRILCDVPCSGDGTMRKNIDVWKKWTTQNSLQLHGLQLRIATRGVEQLAEGGRMVYSTCSLNPIENEAVIASLLEKSQGALELADVSSELPGLKRMPGITKWKVMLKDGQWFEEWKDVPSNRQTQIRPTMFPIKEEEKLKAMNLERCIRILPHHQNTGGFFVAVLIKKSPMPWNKRQPKVHQKLPGKTEDTEVTATNAGDGSEDATEKPTLAEDEEPKKVQELQNSDTEQSKKGVCGPPPSKKMKLFGFKEDPFVFLPEDDPLFLPIQKFYALDPSFPKMNLLTRTQEGKKRQLYMVSKELRNVLLNNSEKMKVINTGIKVWSRNSDGEQFGCAFRLAQEGIYTLYPFIHARIVNVCIEDVKILLTQENPFLSKFSSETQRKVKDMAMGSIVLKYEPDPEKPDDLQCPIVLCGWQGKTSLRAFVPKNERLHYLRMMGVEVFKAKRKEGESEGKTEEEVQCRPAQTEEGMDVEDKERDAVTKMEAEIDEESPRSPVESSAMEIENKSEDSDQCSKNTNSHINQESKDMNTNNVKD</sequence>
<comment type="function">
    <text evidence="1">RNA cytosine C(5)-methyltransferase that methylates cytosine to 5-methylcytosine (m5C) in various RNAs, such as tRNAs, mRNAs and some long non-coding RNAs (lncRNAs). Involved in various processes, such as epidermal stem cell differentiation, testis differentiation and maternal to zygotic transition during early development: acts by increasing protein synthesis; cytosine C(5)-methylation promoting tRNA stability and preventing mRNA decay. Methylates cytosine to 5-methylcytosine (m5C) at positions 34 and 48 of intron-containing tRNA(Leu)(CAA) precursors, and at positions 48, 49 and 50 of tRNA(Gly)(GCC) precursors. tRNA methylation is required generation of RNA fragments derived from tRNAs (tRFs). Also mediates C(5)-methylation of mitochondrial tRNAs. Catalyzes cytosine C(5)-methylation of mRNAs, leading to stabilize them and prevent mRNA decay. Cytosine C(5)-methylation of mRNAs also regulates mRNA export. Also mediates cytosine C(5)-methylation of non-coding RNAs, such as vault RNAs (vtRNAs), promoting their processing into regulatory small RNAs. Required for proper spindle assembly and chromosome segregation, independently of its methyltransferase activity.</text>
</comment>
<comment type="catalytic activity">
    <reaction evidence="1">
        <text>cytidine(48) in tRNA + S-adenosyl-L-methionine = 5-methylcytidine(48) in tRNA + S-adenosyl-L-homocysteine + H(+)</text>
        <dbReference type="Rhea" id="RHEA:42948"/>
        <dbReference type="Rhea" id="RHEA-COMP:10293"/>
        <dbReference type="Rhea" id="RHEA-COMP:10297"/>
        <dbReference type="ChEBI" id="CHEBI:15378"/>
        <dbReference type="ChEBI" id="CHEBI:57856"/>
        <dbReference type="ChEBI" id="CHEBI:59789"/>
        <dbReference type="ChEBI" id="CHEBI:74483"/>
        <dbReference type="ChEBI" id="CHEBI:82748"/>
    </reaction>
    <physiologicalReaction direction="left-to-right" evidence="1">
        <dbReference type="Rhea" id="RHEA:42949"/>
    </physiologicalReaction>
</comment>
<comment type="catalytic activity">
    <reaction evidence="1">
        <text>cytidine(49) in tRNA + S-adenosyl-L-methionine = 5-methylcytidine(49) in tRNA + S-adenosyl-L-homocysteine + H(+)</text>
        <dbReference type="Rhea" id="RHEA:42952"/>
        <dbReference type="Rhea" id="RHEA-COMP:10294"/>
        <dbReference type="Rhea" id="RHEA-COMP:10385"/>
        <dbReference type="ChEBI" id="CHEBI:15378"/>
        <dbReference type="ChEBI" id="CHEBI:57856"/>
        <dbReference type="ChEBI" id="CHEBI:59789"/>
        <dbReference type="ChEBI" id="CHEBI:74483"/>
        <dbReference type="ChEBI" id="CHEBI:82748"/>
    </reaction>
    <physiologicalReaction direction="left-to-right" evidence="1">
        <dbReference type="Rhea" id="RHEA:42953"/>
    </physiologicalReaction>
</comment>
<comment type="catalytic activity">
    <reaction evidence="1">
        <text>cytidine(50) in tRNA + S-adenosyl-L-methionine = 5-methylcytidine(50) in tRNA + S-adenosyl-L-homocysteine + H(+)</text>
        <dbReference type="Rhea" id="RHEA:61488"/>
        <dbReference type="Rhea" id="RHEA-COMP:15838"/>
        <dbReference type="Rhea" id="RHEA-COMP:15839"/>
        <dbReference type="ChEBI" id="CHEBI:15378"/>
        <dbReference type="ChEBI" id="CHEBI:57856"/>
        <dbReference type="ChEBI" id="CHEBI:59789"/>
        <dbReference type="ChEBI" id="CHEBI:74483"/>
        <dbReference type="ChEBI" id="CHEBI:82748"/>
    </reaction>
    <physiologicalReaction direction="left-to-right" evidence="1">
        <dbReference type="Rhea" id="RHEA:61489"/>
    </physiologicalReaction>
</comment>
<comment type="catalytic activity">
    <reaction evidence="1">
        <text>cytidine(34) in tRNA precursor + S-adenosyl-L-methionine = 5-methylcytidine(34) in tRNA precursor + S-adenosyl-L-homocysteine + H(+)</text>
        <dbReference type="Rhea" id="RHEA:42940"/>
        <dbReference type="Rhea" id="RHEA-COMP:10291"/>
        <dbReference type="Rhea" id="RHEA-COMP:10295"/>
        <dbReference type="ChEBI" id="CHEBI:15378"/>
        <dbReference type="ChEBI" id="CHEBI:57856"/>
        <dbReference type="ChEBI" id="CHEBI:59789"/>
        <dbReference type="ChEBI" id="CHEBI:74483"/>
        <dbReference type="ChEBI" id="CHEBI:82748"/>
        <dbReference type="EC" id="2.1.1.203"/>
    </reaction>
    <physiologicalReaction direction="left-to-right" evidence="1">
        <dbReference type="Rhea" id="RHEA:42941"/>
    </physiologicalReaction>
</comment>
<comment type="catalytic activity">
    <reaction evidence="1">
        <text>a cytidine in mRNA + S-adenosyl-L-methionine = a 5-methylcytidine in mRNA + S-adenosyl-L-homocysteine + H(+)</text>
        <dbReference type="Rhea" id="RHEA:61464"/>
        <dbReference type="Rhea" id="RHEA-COMP:15145"/>
        <dbReference type="Rhea" id="RHEA-COMP:15826"/>
        <dbReference type="ChEBI" id="CHEBI:15378"/>
        <dbReference type="ChEBI" id="CHEBI:57856"/>
        <dbReference type="ChEBI" id="CHEBI:59789"/>
        <dbReference type="ChEBI" id="CHEBI:74483"/>
        <dbReference type="ChEBI" id="CHEBI:82748"/>
    </reaction>
    <physiologicalReaction direction="left-to-right" evidence="1">
        <dbReference type="Rhea" id="RHEA:61465"/>
    </physiologicalReaction>
</comment>
<comment type="subcellular location">
    <subcellularLocation>
        <location evidence="1">Nucleus</location>
        <location evidence="1">Nucleolus</location>
    </subcellularLocation>
    <subcellularLocation>
        <location evidence="1">Cytoplasm</location>
    </subcellularLocation>
    <subcellularLocation>
        <location evidence="1">Mitochondrion</location>
    </subcellularLocation>
    <subcellularLocation>
        <location evidence="1">Cytoplasm</location>
        <location evidence="1">Cytoskeleton</location>
        <location evidence="1">Spindle</location>
    </subcellularLocation>
    <subcellularLocation>
        <location evidence="2">Secreted</location>
        <location evidence="2">Extracellular exosome</location>
    </subcellularLocation>
</comment>
<comment type="similarity">
    <text evidence="3">Belongs to the class I-like SAM-binding methyltransferase superfamily. RsmB/NOP family. TRM4 subfamily.</text>
</comment>
<organism>
    <name type="scientific">Gallus gallus</name>
    <name type="common">Chicken</name>
    <dbReference type="NCBI Taxonomy" id="9031"/>
    <lineage>
        <taxon>Eukaryota</taxon>
        <taxon>Metazoa</taxon>
        <taxon>Chordata</taxon>
        <taxon>Craniata</taxon>
        <taxon>Vertebrata</taxon>
        <taxon>Euteleostomi</taxon>
        <taxon>Archelosauria</taxon>
        <taxon>Archosauria</taxon>
        <taxon>Dinosauria</taxon>
        <taxon>Saurischia</taxon>
        <taxon>Theropoda</taxon>
        <taxon>Coelurosauria</taxon>
        <taxon>Aves</taxon>
        <taxon>Neognathae</taxon>
        <taxon>Galloanserae</taxon>
        <taxon>Galliformes</taxon>
        <taxon>Phasianidae</taxon>
        <taxon>Phasianinae</taxon>
        <taxon>Gallus</taxon>
    </lineage>
</organism>
<proteinExistence type="evidence at transcript level"/>
<keyword id="KW-0963">Cytoplasm</keyword>
<keyword id="KW-0206">Cytoskeleton</keyword>
<keyword id="KW-0489">Methyltransferase</keyword>
<keyword id="KW-0496">Mitochondrion</keyword>
<keyword id="KW-0539">Nucleus</keyword>
<keyword id="KW-0597">Phosphoprotein</keyword>
<keyword id="KW-1185">Reference proteome</keyword>
<keyword id="KW-0694">RNA-binding</keyword>
<keyword id="KW-0949">S-adenosyl-L-methionine</keyword>
<keyword id="KW-0964">Secreted</keyword>
<keyword id="KW-0808">Transferase</keyword>
<keyword id="KW-0819">tRNA processing</keyword>
<keyword id="KW-0820">tRNA-binding</keyword>
<name>NSUN2_CHICK</name>
<evidence type="ECO:0000250" key="1">
    <source>
        <dbReference type="UniProtKB" id="Q08J23"/>
    </source>
</evidence>
<evidence type="ECO:0000250" key="2">
    <source>
        <dbReference type="UniProtKB" id="Q1HFZ0"/>
    </source>
</evidence>
<evidence type="ECO:0000255" key="3">
    <source>
        <dbReference type="PROSITE-ProRule" id="PRU01023"/>
    </source>
</evidence>
<evidence type="ECO:0000256" key="4">
    <source>
        <dbReference type="SAM" id="MobiDB-lite"/>
    </source>
</evidence>
<evidence type="ECO:0000305" key="5"/>
<accession>Q5ZLV4</accession>